<evidence type="ECO:0000255" key="1">
    <source>
        <dbReference type="HAMAP-Rule" id="MF_01633"/>
    </source>
</evidence>
<reference key="1">
    <citation type="submission" date="2006-01" db="EMBL/GenBank/DDBJ databases">
        <title>Complete sequence of Rhodopseudomonas palustris HaA2.</title>
        <authorList>
            <consortium name="US DOE Joint Genome Institute"/>
            <person name="Copeland A."/>
            <person name="Lucas S."/>
            <person name="Lapidus A."/>
            <person name="Barry K."/>
            <person name="Detter J.C."/>
            <person name="Glavina T."/>
            <person name="Hammon N."/>
            <person name="Israni S."/>
            <person name="Pitluck S."/>
            <person name="Chain P."/>
            <person name="Malfatti S."/>
            <person name="Shin M."/>
            <person name="Vergez L."/>
            <person name="Schmutz J."/>
            <person name="Larimer F."/>
            <person name="Land M."/>
            <person name="Hauser L."/>
            <person name="Pelletier D.A."/>
            <person name="Kyrpides N."/>
            <person name="Anderson I."/>
            <person name="Oda Y."/>
            <person name="Harwood C.S."/>
            <person name="Richardson P."/>
        </authorList>
    </citation>
    <scope>NUCLEOTIDE SEQUENCE [LARGE SCALE GENOMIC DNA]</scope>
    <source>
        <strain>HaA2</strain>
    </source>
</reference>
<accession>Q2IWJ9</accession>
<name>QUEC1_RHOP2</name>
<dbReference type="EC" id="6.3.4.20" evidence="1"/>
<dbReference type="EMBL" id="CP000250">
    <property type="protein sequence ID" value="ABD07411.1"/>
    <property type="molecule type" value="Genomic_DNA"/>
</dbReference>
<dbReference type="RefSeq" id="WP_011441596.1">
    <property type="nucleotide sequence ID" value="NC_007778.1"/>
</dbReference>
<dbReference type="SMR" id="Q2IWJ9"/>
<dbReference type="STRING" id="316058.RPB_2709"/>
<dbReference type="KEGG" id="rpb:RPB_2709"/>
<dbReference type="eggNOG" id="COG0603">
    <property type="taxonomic scope" value="Bacteria"/>
</dbReference>
<dbReference type="HOGENOM" id="CLU_081854_0_0_5"/>
<dbReference type="OrthoDB" id="9789567at2"/>
<dbReference type="UniPathway" id="UPA00391"/>
<dbReference type="Proteomes" id="UP000008809">
    <property type="component" value="Chromosome"/>
</dbReference>
<dbReference type="GO" id="GO:0005524">
    <property type="term" value="F:ATP binding"/>
    <property type="evidence" value="ECO:0007669"/>
    <property type="project" value="UniProtKB-UniRule"/>
</dbReference>
<dbReference type="GO" id="GO:0016879">
    <property type="term" value="F:ligase activity, forming carbon-nitrogen bonds"/>
    <property type="evidence" value="ECO:0007669"/>
    <property type="project" value="UniProtKB-UniRule"/>
</dbReference>
<dbReference type="GO" id="GO:0008270">
    <property type="term" value="F:zinc ion binding"/>
    <property type="evidence" value="ECO:0007669"/>
    <property type="project" value="UniProtKB-UniRule"/>
</dbReference>
<dbReference type="GO" id="GO:0008616">
    <property type="term" value="P:queuosine biosynthetic process"/>
    <property type="evidence" value="ECO:0007669"/>
    <property type="project" value="UniProtKB-UniRule"/>
</dbReference>
<dbReference type="CDD" id="cd01995">
    <property type="entry name" value="QueC-like"/>
    <property type="match status" value="1"/>
</dbReference>
<dbReference type="Gene3D" id="3.40.50.620">
    <property type="entry name" value="HUPs"/>
    <property type="match status" value="1"/>
</dbReference>
<dbReference type="HAMAP" id="MF_01633">
    <property type="entry name" value="QueC"/>
    <property type="match status" value="1"/>
</dbReference>
<dbReference type="InterPro" id="IPR018317">
    <property type="entry name" value="QueC"/>
</dbReference>
<dbReference type="InterPro" id="IPR014729">
    <property type="entry name" value="Rossmann-like_a/b/a_fold"/>
</dbReference>
<dbReference type="NCBIfam" id="TIGR00364">
    <property type="entry name" value="7-cyano-7-deazaguanine synthase QueC"/>
    <property type="match status" value="1"/>
</dbReference>
<dbReference type="PANTHER" id="PTHR42914">
    <property type="entry name" value="7-CYANO-7-DEAZAGUANINE SYNTHASE"/>
    <property type="match status" value="1"/>
</dbReference>
<dbReference type="PANTHER" id="PTHR42914:SF1">
    <property type="entry name" value="7-CYANO-7-DEAZAGUANINE SYNTHASE"/>
    <property type="match status" value="1"/>
</dbReference>
<dbReference type="Pfam" id="PF06508">
    <property type="entry name" value="QueC"/>
    <property type="match status" value="1"/>
</dbReference>
<dbReference type="PIRSF" id="PIRSF006293">
    <property type="entry name" value="ExsB"/>
    <property type="match status" value="1"/>
</dbReference>
<dbReference type="SUPFAM" id="SSF52402">
    <property type="entry name" value="Adenine nucleotide alpha hydrolases-like"/>
    <property type="match status" value="1"/>
</dbReference>
<sequence>MTEPVSDQTALVLFSGGQDSATCLAWALSRFARVEMIGFDYGQRHAVELDCRAKLLDGFRAISSEWASKLGDSHTLAIPTLSAISDTALTRDVEIAMGADGLPNTFVPGRNLIFLTFAAALAYRRGIADIVGGMCETDYSGYPDCRDDTIKALQGAISLGMARDFELHTPLMWRDKAATWQLAHDLGGAALVDLIREHSHTCYLGERGERHDWGYGCGECPACALRARGWREYRTRTG</sequence>
<keyword id="KW-0067">ATP-binding</keyword>
<keyword id="KW-0436">Ligase</keyword>
<keyword id="KW-0479">Metal-binding</keyword>
<keyword id="KW-0547">Nucleotide-binding</keyword>
<keyword id="KW-0671">Queuosine biosynthesis</keyword>
<keyword id="KW-1185">Reference proteome</keyword>
<keyword id="KW-0862">Zinc</keyword>
<comment type="function">
    <text evidence="1">Catalyzes the ATP-dependent conversion of 7-carboxy-7-deazaguanine (CDG) to 7-cyano-7-deazaguanine (preQ(0)).</text>
</comment>
<comment type="catalytic activity">
    <reaction evidence="1">
        <text>7-carboxy-7-deazaguanine + NH4(+) + ATP = 7-cyano-7-deazaguanine + ADP + phosphate + H2O + H(+)</text>
        <dbReference type="Rhea" id="RHEA:27982"/>
        <dbReference type="ChEBI" id="CHEBI:15377"/>
        <dbReference type="ChEBI" id="CHEBI:15378"/>
        <dbReference type="ChEBI" id="CHEBI:28938"/>
        <dbReference type="ChEBI" id="CHEBI:30616"/>
        <dbReference type="ChEBI" id="CHEBI:43474"/>
        <dbReference type="ChEBI" id="CHEBI:45075"/>
        <dbReference type="ChEBI" id="CHEBI:61036"/>
        <dbReference type="ChEBI" id="CHEBI:456216"/>
        <dbReference type="EC" id="6.3.4.20"/>
    </reaction>
</comment>
<comment type="cofactor">
    <cofactor evidence="1">
        <name>Zn(2+)</name>
        <dbReference type="ChEBI" id="CHEBI:29105"/>
    </cofactor>
    <text evidence="1">Binds 1 zinc ion per subunit.</text>
</comment>
<comment type="pathway">
    <text evidence="1">Purine metabolism; 7-cyano-7-deazaguanine biosynthesis.</text>
</comment>
<comment type="similarity">
    <text evidence="1">Belongs to the QueC family.</text>
</comment>
<proteinExistence type="inferred from homology"/>
<feature type="chain" id="PRO_0000246908" description="7-cyano-7-deazaguanine synthase 1">
    <location>
        <begin position="1"/>
        <end position="238"/>
    </location>
</feature>
<feature type="binding site" evidence="1">
    <location>
        <begin position="14"/>
        <end position="24"/>
    </location>
    <ligand>
        <name>ATP</name>
        <dbReference type="ChEBI" id="CHEBI:30616"/>
    </ligand>
</feature>
<feature type="binding site" evidence="1">
    <location>
        <position position="202"/>
    </location>
    <ligand>
        <name>Zn(2+)</name>
        <dbReference type="ChEBI" id="CHEBI:29105"/>
    </ligand>
</feature>
<feature type="binding site" evidence="1">
    <location>
        <position position="217"/>
    </location>
    <ligand>
        <name>Zn(2+)</name>
        <dbReference type="ChEBI" id="CHEBI:29105"/>
    </ligand>
</feature>
<feature type="binding site" evidence="1">
    <location>
        <position position="220"/>
    </location>
    <ligand>
        <name>Zn(2+)</name>
        <dbReference type="ChEBI" id="CHEBI:29105"/>
    </ligand>
</feature>
<feature type="binding site" evidence="1">
    <location>
        <position position="223"/>
    </location>
    <ligand>
        <name>Zn(2+)</name>
        <dbReference type="ChEBI" id="CHEBI:29105"/>
    </ligand>
</feature>
<gene>
    <name evidence="1" type="primary">queC1</name>
    <name type="ordered locus">RPB_2709</name>
</gene>
<organism>
    <name type="scientific">Rhodopseudomonas palustris (strain HaA2)</name>
    <dbReference type="NCBI Taxonomy" id="316058"/>
    <lineage>
        <taxon>Bacteria</taxon>
        <taxon>Pseudomonadati</taxon>
        <taxon>Pseudomonadota</taxon>
        <taxon>Alphaproteobacteria</taxon>
        <taxon>Hyphomicrobiales</taxon>
        <taxon>Nitrobacteraceae</taxon>
        <taxon>Rhodopseudomonas</taxon>
    </lineage>
</organism>
<protein>
    <recommendedName>
        <fullName evidence="1">7-cyano-7-deazaguanine synthase 1</fullName>
        <ecNumber evidence="1">6.3.4.20</ecNumber>
    </recommendedName>
    <alternativeName>
        <fullName evidence="1">7-cyano-7-carbaguanine synthase 1</fullName>
    </alternativeName>
    <alternativeName>
        <fullName evidence="1">PreQ(0) synthase 1</fullName>
    </alternativeName>
    <alternativeName>
        <fullName evidence="1">Queuosine biosynthesis protein QueC 1</fullName>
    </alternativeName>
</protein>